<organism>
    <name type="scientific">Schizosaccharomyces pombe (strain 972 / ATCC 24843)</name>
    <name type="common">Fission yeast</name>
    <dbReference type="NCBI Taxonomy" id="284812"/>
    <lineage>
        <taxon>Eukaryota</taxon>
        <taxon>Fungi</taxon>
        <taxon>Dikarya</taxon>
        <taxon>Ascomycota</taxon>
        <taxon>Taphrinomycotina</taxon>
        <taxon>Schizosaccharomycetes</taxon>
        <taxon>Schizosaccharomycetales</taxon>
        <taxon>Schizosaccharomycetaceae</taxon>
        <taxon>Schizosaccharomyces</taxon>
    </lineage>
</organism>
<dbReference type="EC" id="3.1.13.4" evidence="2"/>
<dbReference type="EMBL" id="CU329670">
    <property type="protein sequence ID" value="CAA91128.2"/>
    <property type="molecule type" value="Genomic_DNA"/>
</dbReference>
<dbReference type="PIR" id="T11614">
    <property type="entry name" value="T11614"/>
</dbReference>
<dbReference type="RefSeq" id="NP_593053.2">
    <property type="nucleotide sequence ID" value="NM_001018451.2"/>
</dbReference>
<dbReference type="SMR" id="Q09798"/>
<dbReference type="BioGRID" id="278180">
    <property type="interactions" value="2"/>
</dbReference>
<dbReference type="FunCoup" id="Q09798">
    <property type="interactions" value="450"/>
</dbReference>
<dbReference type="STRING" id="284812.Q09798"/>
<dbReference type="iPTMnet" id="Q09798"/>
<dbReference type="PaxDb" id="4896-SPAC22G7.04.1"/>
<dbReference type="EnsemblFungi" id="SPAC22G7.04.1">
    <property type="protein sequence ID" value="SPAC22G7.04.1:pep"/>
    <property type="gene ID" value="SPAC22G7.04"/>
</dbReference>
<dbReference type="GeneID" id="2541684"/>
<dbReference type="KEGG" id="spo:2541684"/>
<dbReference type="PomBase" id="SPAC22G7.04">
    <property type="gene designation" value="pan2"/>
</dbReference>
<dbReference type="VEuPathDB" id="FungiDB:SPAC22G7.04"/>
<dbReference type="eggNOG" id="KOG1275">
    <property type="taxonomic scope" value="Eukaryota"/>
</dbReference>
<dbReference type="HOGENOM" id="CLU_002369_1_0_1"/>
<dbReference type="InParanoid" id="Q09798"/>
<dbReference type="OMA" id="TQELLWT"/>
<dbReference type="PRO" id="PR:Q09798"/>
<dbReference type="Proteomes" id="UP000002485">
    <property type="component" value="Chromosome I"/>
</dbReference>
<dbReference type="GO" id="GO:0005737">
    <property type="term" value="C:cytoplasm"/>
    <property type="evidence" value="ECO:0007005"/>
    <property type="project" value="PomBase"/>
</dbReference>
<dbReference type="GO" id="GO:0000932">
    <property type="term" value="C:P-body"/>
    <property type="evidence" value="ECO:0000318"/>
    <property type="project" value="GO_Central"/>
</dbReference>
<dbReference type="GO" id="GO:0031251">
    <property type="term" value="C:PAN complex"/>
    <property type="evidence" value="ECO:0000318"/>
    <property type="project" value="GO_Central"/>
</dbReference>
<dbReference type="GO" id="GO:0004843">
    <property type="term" value="F:cysteine-type deubiquitinase activity"/>
    <property type="evidence" value="ECO:0000255"/>
    <property type="project" value="PomBase"/>
</dbReference>
<dbReference type="GO" id="GO:0046872">
    <property type="term" value="F:metal ion binding"/>
    <property type="evidence" value="ECO:0007669"/>
    <property type="project" value="UniProtKB-KW"/>
</dbReference>
<dbReference type="GO" id="GO:0003676">
    <property type="term" value="F:nucleic acid binding"/>
    <property type="evidence" value="ECO:0007669"/>
    <property type="project" value="InterPro"/>
</dbReference>
<dbReference type="GO" id="GO:0004535">
    <property type="term" value="F:poly(A)-specific ribonuclease activity"/>
    <property type="evidence" value="ECO:0007669"/>
    <property type="project" value="UniProtKB-UniRule"/>
</dbReference>
<dbReference type="GO" id="GO:0006397">
    <property type="term" value="P:mRNA processing"/>
    <property type="evidence" value="ECO:0007669"/>
    <property type="project" value="UniProtKB-KW"/>
</dbReference>
<dbReference type="GO" id="GO:0000289">
    <property type="term" value="P:nuclear-transcribed mRNA poly(A) tail shortening"/>
    <property type="evidence" value="ECO:0000318"/>
    <property type="project" value="GO_Central"/>
</dbReference>
<dbReference type="CDD" id="cd06143">
    <property type="entry name" value="PAN2_exo"/>
    <property type="match status" value="1"/>
</dbReference>
<dbReference type="CDD" id="cd02672">
    <property type="entry name" value="Peptidase_C19P"/>
    <property type="match status" value="1"/>
</dbReference>
<dbReference type="FunFam" id="2.130.10.10:FF:000459">
    <property type="entry name" value="PAN2-PAN3 deadenylation complex catalytic subunit PAN2"/>
    <property type="match status" value="1"/>
</dbReference>
<dbReference type="FunFam" id="3.30.420.10:FF:000028">
    <property type="entry name" value="PAN2-PAN3 deadenylation complex catalytic subunit PAN2"/>
    <property type="match status" value="1"/>
</dbReference>
<dbReference type="Gene3D" id="3.90.70.10">
    <property type="entry name" value="Cysteine proteinases"/>
    <property type="match status" value="1"/>
</dbReference>
<dbReference type="Gene3D" id="3.30.420.10">
    <property type="entry name" value="Ribonuclease H-like superfamily/Ribonuclease H"/>
    <property type="match status" value="1"/>
</dbReference>
<dbReference type="Gene3D" id="2.130.10.10">
    <property type="entry name" value="YVTN repeat-like/Quinoprotein amine dehydrogenase"/>
    <property type="match status" value="1"/>
</dbReference>
<dbReference type="HAMAP" id="MF_03182">
    <property type="entry name" value="PAN2"/>
    <property type="match status" value="1"/>
</dbReference>
<dbReference type="InterPro" id="IPR013520">
    <property type="entry name" value="Exonuclease_RNaseT/DNA_pol3"/>
</dbReference>
<dbReference type="InterPro" id="IPR030843">
    <property type="entry name" value="PAN2"/>
</dbReference>
<dbReference type="InterPro" id="IPR050785">
    <property type="entry name" value="PAN2-PAN3_catalytic_subunit"/>
</dbReference>
<dbReference type="InterPro" id="IPR048841">
    <property type="entry name" value="PAN2_N"/>
</dbReference>
<dbReference type="InterPro" id="IPR028881">
    <property type="entry name" value="PAN2_UCH_dom"/>
</dbReference>
<dbReference type="InterPro" id="IPR038765">
    <property type="entry name" value="Papain-like_cys_pep_sf"/>
</dbReference>
<dbReference type="InterPro" id="IPR012337">
    <property type="entry name" value="RNaseH-like_sf"/>
</dbReference>
<dbReference type="InterPro" id="IPR036397">
    <property type="entry name" value="RNaseH_sf"/>
</dbReference>
<dbReference type="InterPro" id="IPR028889">
    <property type="entry name" value="USP_dom"/>
</dbReference>
<dbReference type="InterPro" id="IPR015943">
    <property type="entry name" value="WD40/YVTN_repeat-like_dom_sf"/>
</dbReference>
<dbReference type="InterPro" id="IPR036322">
    <property type="entry name" value="WD40_repeat_dom_sf"/>
</dbReference>
<dbReference type="PANTHER" id="PTHR15728">
    <property type="entry name" value="DEADENYLATION COMPLEX CATALYTIC SUBUNIT PAN2"/>
    <property type="match status" value="1"/>
</dbReference>
<dbReference type="PANTHER" id="PTHR15728:SF0">
    <property type="entry name" value="PAN2-PAN3 DEADENYLATION COMPLEX CATALYTIC SUBUNIT PAN2"/>
    <property type="match status" value="1"/>
</dbReference>
<dbReference type="Pfam" id="PF20770">
    <property type="entry name" value="PAN2_N"/>
    <property type="match status" value="1"/>
</dbReference>
<dbReference type="Pfam" id="PF00929">
    <property type="entry name" value="RNase_T"/>
    <property type="match status" value="1"/>
</dbReference>
<dbReference type="Pfam" id="PF13423">
    <property type="entry name" value="UCH_1"/>
    <property type="match status" value="1"/>
</dbReference>
<dbReference type="SMART" id="SM00479">
    <property type="entry name" value="EXOIII"/>
    <property type="match status" value="1"/>
</dbReference>
<dbReference type="SUPFAM" id="SSF54001">
    <property type="entry name" value="Cysteine proteinases"/>
    <property type="match status" value="1"/>
</dbReference>
<dbReference type="SUPFAM" id="SSF53098">
    <property type="entry name" value="Ribonuclease H-like"/>
    <property type="match status" value="1"/>
</dbReference>
<dbReference type="SUPFAM" id="SSF50978">
    <property type="entry name" value="WD40 repeat-like"/>
    <property type="match status" value="1"/>
</dbReference>
<dbReference type="PROSITE" id="PS50235">
    <property type="entry name" value="USP_3"/>
    <property type="match status" value="1"/>
</dbReference>
<gene>
    <name evidence="2" type="primary">pan2</name>
    <name type="synonym">ubp13</name>
    <name type="ORF">SPAC22G7.04</name>
</gene>
<reference key="1">
    <citation type="journal article" date="2002" name="Nature">
        <title>The genome sequence of Schizosaccharomyces pombe.</title>
        <authorList>
            <person name="Wood V."/>
            <person name="Gwilliam R."/>
            <person name="Rajandream M.A."/>
            <person name="Lyne M.H."/>
            <person name="Lyne R."/>
            <person name="Stewart A."/>
            <person name="Sgouros J.G."/>
            <person name="Peat N."/>
            <person name="Hayles J."/>
            <person name="Baker S.G."/>
            <person name="Basham D."/>
            <person name="Bowman S."/>
            <person name="Brooks K."/>
            <person name="Brown D."/>
            <person name="Brown S."/>
            <person name="Chillingworth T."/>
            <person name="Churcher C.M."/>
            <person name="Collins M."/>
            <person name="Connor R."/>
            <person name="Cronin A."/>
            <person name="Davis P."/>
            <person name="Feltwell T."/>
            <person name="Fraser A."/>
            <person name="Gentles S."/>
            <person name="Goble A."/>
            <person name="Hamlin N."/>
            <person name="Harris D.E."/>
            <person name="Hidalgo J."/>
            <person name="Hodgson G."/>
            <person name="Holroyd S."/>
            <person name="Hornsby T."/>
            <person name="Howarth S."/>
            <person name="Huckle E.J."/>
            <person name="Hunt S."/>
            <person name="Jagels K."/>
            <person name="James K.D."/>
            <person name="Jones L."/>
            <person name="Jones M."/>
            <person name="Leather S."/>
            <person name="McDonald S."/>
            <person name="McLean J."/>
            <person name="Mooney P."/>
            <person name="Moule S."/>
            <person name="Mungall K.L."/>
            <person name="Murphy L.D."/>
            <person name="Niblett D."/>
            <person name="Odell C."/>
            <person name="Oliver K."/>
            <person name="O'Neil S."/>
            <person name="Pearson D."/>
            <person name="Quail M.A."/>
            <person name="Rabbinowitsch E."/>
            <person name="Rutherford K.M."/>
            <person name="Rutter S."/>
            <person name="Saunders D."/>
            <person name="Seeger K."/>
            <person name="Sharp S."/>
            <person name="Skelton J."/>
            <person name="Simmonds M.N."/>
            <person name="Squares R."/>
            <person name="Squares S."/>
            <person name="Stevens K."/>
            <person name="Taylor K."/>
            <person name="Taylor R.G."/>
            <person name="Tivey A."/>
            <person name="Walsh S.V."/>
            <person name="Warren T."/>
            <person name="Whitehead S."/>
            <person name="Woodward J.R."/>
            <person name="Volckaert G."/>
            <person name="Aert R."/>
            <person name="Robben J."/>
            <person name="Grymonprez B."/>
            <person name="Weltjens I."/>
            <person name="Vanstreels E."/>
            <person name="Rieger M."/>
            <person name="Schaefer M."/>
            <person name="Mueller-Auer S."/>
            <person name="Gabel C."/>
            <person name="Fuchs M."/>
            <person name="Duesterhoeft A."/>
            <person name="Fritzc C."/>
            <person name="Holzer E."/>
            <person name="Moestl D."/>
            <person name="Hilbert H."/>
            <person name="Borzym K."/>
            <person name="Langer I."/>
            <person name="Beck A."/>
            <person name="Lehrach H."/>
            <person name="Reinhardt R."/>
            <person name="Pohl T.M."/>
            <person name="Eger P."/>
            <person name="Zimmermann W."/>
            <person name="Wedler H."/>
            <person name="Wambutt R."/>
            <person name="Purnelle B."/>
            <person name="Goffeau A."/>
            <person name="Cadieu E."/>
            <person name="Dreano S."/>
            <person name="Gloux S."/>
            <person name="Lelaure V."/>
            <person name="Mottier S."/>
            <person name="Galibert F."/>
            <person name="Aves S.J."/>
            <person name="Xiang Z."/>
            <person name="Hunt C."/>
            <person name="Moore K."/>
            <person name="Hurst S.M."/>
            <person name="Lucas M."/>
            <person name="Rochet M."/>
            <person name="Gaillardin C."/>
            <person name="Tallada V.A."/>
            <person name="Garzon A."/>
            <person name="Thode G."/>
            <person name="Daga R.R."/>
            <person name="Cruzado L."/>
            <person name="Jimenez J."/>
            <person name="Sanchez M."/>
            <person name="del Rey F."/>
            <person name="Benito J."/>
            <person name="Dominguez A."/>
            <person name="Revuelta J.L."/>
            <person name="Moreno S."/>
            <person name="Armstrong J."/>
            <person name="Forsburg S.L."/>
            <person name="Cerutti L."/>
            <person name="Lowe T."/>
            <person name="McCombie W.R."/>
            <person name="Paulsen I."/>
            <person name="Potashkin J."/>
            <person name="Shpakovski G.V."/>
            <person name="Ussery D."/>
            <person name="Barrell B.G."/>
            <person name="Nurse P."/>
        </authorList>
    </citation>
    <scope>NUCLEOTIDE SEQUENCE [LARGE SCALE GENOMIC DNA]</scope>
    <source>
        <strain>972 / ATCC 24843</strain>
    </source>
</reference>
<reference key="2">
    <citation type="journal article" date="2011" name="Science">
        <title>Comparative functional genomics of the fission yeasts.</title>
        <authorList>
            <person name="Rhind N."/>
            <person name="Chen Z."/>
            <person name="Yassour M."/>
            <person name="Thompson D.A."/>
            <person name="Haas B.J."/>
            <person name="Habib N."/>
            <person name="Wapinski I."/>
            <person name="Roy S."/>
            <person name="Lin M.F."/>
            <person name="Heiman D.I."/>
            <person name="Young S.K."/>
            <person name="Furuya K."/>
            <person name="Guo Y."/>
            <person name="Pidoux A."/>
            <person name="Chen H.M."/>
            <person name="Robbertse B."/>
            <person name="Goldberg J.M."/>
            <person name="Aoki K."/>
            <person name="Bayne E.H."/>
            <person name="Berlin A.M."/>
            <person name="Desjardins C.A."/>
            <person name="Dobbs E."/>
            <person name="Dukaj L."/>
            <person name="Fan L."/>
            <person name="FitzGerald M.G."/>
            <person name="French C."/>
            <person name="Gujja S."/>
            <person name="Hansen K."/>
            <person name="Keifenheim D."/>
            <person name="Levin J.Z."/>
            <person name="Mosher R.A."/>
            <person name="Mueller C.A."/>
            <person name="Pfiffner J."/>
            <person name="Priest M."/>
            <person name="Russ C."/>
            <person name="Smialowska A."/>
            <person name="Swoboda P."/>
            <person name="Sykes S.M."/>
            <person name="Vaughn M."/>
            <person name="Vengrova S."/>
            <person name="Yoder R."/>
            <person name="Zeng Q."/>
            <person name="Allshire R."/>
            <person name="Baulcombe D."/>
            <person name="Birren B.W."/>
            <person name="Brown W."/>
            <person name="Ekwall K."/>
            <person name="Kellis M."/>
            <person name="Leatherwood J."/>
            <person name="Levin H."/>
            <person name="Margalit H."/>
            <person name="Martienssen R."/>
            <person name="Nieduszynski C.A."/>
            <person name="Spatafora J.W."/>
            <person name="Friedman N."/>
            <person name="Dalgaard J.Z."/>
            <person name="Baumann P."/>
            <person name="Niki H."/>
            <person name="Regev A."/>
            <person name="Nusbaum C."/>
        </authorList>
    </citation>
    <scope>REVISION OF GENE MODEL</scope>
</reference>
<reference key="3">
    <citation type="journal article" date="2006" name="Nat. Biotechnol.">
        <title>ORFeome cloning and global analysis of protein localization in the fission yeast Schizosaccharomyces pombe.</title>
        <authorList>
            <person name="Matsuyama A."/>
            <person name="Arai R."/>
            <person name="Yashiroda Y."/>
            <person name="Shirai A."/>
            <person name="Kamata A."/>
            <person name="Sekido S."/>
            <person name="Kobayashi Y."/>
            <person name="Hashimoto A."/>
            <person name="Hamamoto M."/>
            <person name="Hiraoka Y."/>
            <person name="Horinouchi S."/>
            <person name="Yoshida M."/>
        </authorList>
    </citation>
    <scope>SUBCELLULAR LOCATION [LARGE SCALE ANALYSIS]</scope>
</reference>
<keyword id="KW-0963">Cytoplasm</keyword>
<keyword id="KW-0269">Exonuclease</keyword>
<keyword id="KW-0378">Hydrolase</keyword>
<keyword id="KW-0479">Metal-binding</keyword>
<keyword id="KW-0507">mRNA processing</keyword>
<keyword id="KW-0540">Nuclease</keyword>
<keyword id="KW-1185">Reference proteome</keyword>
<keyword id="KW-0677">Repeat</keyword>
<keyword id="KW-0853">WD repeat</keyword>
<proteinExistence type="inferred from homology"/>
<comment type="function">
    <text evidence="2">Catalytic subunit of the poly(A)-nuclease (PAN) deadenylation complex, one of two cytoplasmic mRNA deadenylases involved in mRNA turnover. PAN specifically shortens poly(A) tails of RNA and the activity is stimulated by poly(A)-binding protein pab1. PAN deadenylation is followed by rapid degradation of the shortened mRNA tails by the CCR4-NOT complex. Deadenylated mRNAs are then degraded by two alternative mechanisms, namely exosome-mediated 3'-5' exonucleolytic degradation, or deadenylation-dependent mRNA decaping and subsequent 5'-3' exonucleolytic degradation by xrn1. May also be involved in post-transcriptional maturation of mRNA poly(A) tails.</text>
</comment>
<comment type="catalytic activity">
    <reaction evidence="2">
        <text>Exonucleolytic cleavage of poly(A) to 5'-AMP.</text>
        <dbReference type="EC" id="3.1.13.4"/>
    </reaction>
</comment>
<comment type="cofactor">
    <cofactor evidence="2">
        <name>a divalent metal cation</name>
        <dbReference type="ChEBI" id="CHEBI:60240"/>
    </cofactor>
    <text evidence="2">Binds 2 metal cations per subunit in the catalytic exonuclease domain.</text>
</comment>
<comment type="activity regulation">
    <text evidence="1 2">Positively regulated by the regulatory subunit ppk26/pan3.</text>
</comment>
<comment type="subunit">
    <text evidence="2">Forms a heterotrimer with an asymmetric homodimer of the regulatory subunit ppk26/pan3 to form the poly(A)-nuclease (PAN) deadenylation complex.</text>
</comment>
<comment type="subcellular location">
    <subcellularLocation>
        <location evidence="2 3">Cytoplasm</location>
    </subcellularLocation>
</comment>
<comment type="domain">
    <text evidence="2">Contains a pseudo-UCH domain. This ubiquitin C-terminal hydrolase (UCH)-like or ubiquitin specific protease (USP)-like domain is predicted to be catalytically inactive because it lacks the active site catalytic triad characteristic of thiol proteases, with residues at the equivalent structural positions that are incompatible with catalysis, and it cannot bind ubiquitin. It functions as a structural scaffold for intra- and intermolecular interactions in the complex.</text>
</comment>
<comment type="domain">
    <text evidence="2">The linker, or PAN3 interaction domain (PID), between the WD40 repeats and the pseudo-UCH domain mediates interaction with ppk26/pan3.</text>
</comment>
<comment type="similarity">
    <text evidence="2">Belongs to the peptidase C19 family. PAN2 subfamily.</text>
</comment>
<name>PAN2_SCHPO</name>
<evidence type="ECO:0000250" key="1"/>
<evidence type="ECO:0000255" key="2">
    <source>
        <dbReference type="HAMAP-Rule" id="MF_03182"/>
    </source>
</evidence>
<evidence type="ECO:0000269" key="3">
    <source>
    </source>
</evidence>
<feature type="chain" id="PRO_0000116406" description="PAN2-PAN3 deadenylation complex catalytic subunit pan2">
    <location>
        <begin position="1"/>
        <end position="1088"/>
    </location>
</feature>
<feature type="repeat" description="WD 1" evidence="2">
    <location>
        <begin position="16"/>
        <end position="56"/>
    </location>
</feature>
<feature type="repeat" description="WD 2" evidence="2">
    <location>
        <begin position="136"/>
        <end position="175"/>
    </location>
</feature>
<feature type="repeat" description="WD 3" evidence="2">
    <location>
        <begin position="178"/>
        <end position="224"/>
    </location>
</feature>
<feature type="repeat" description="WD 4" evidence="2">
    <location>
        <begin position="270"/>
        <end position="309"/>
    </location>
</feature>
<feature type="domain" description="USP" evidence="2">
    <location>
        <begin position="443"/>
        <end position="814"/>
    </location>
</feature>
<feature type="domain" description="Exonuclease" evidence="2">
    <location>
        <begin position="860"/>
        <end position="1033"/>
    </location>
</feature>
<feature type="region of interest" description="Linker" evidence="2">
    <location>
        <begin position="309"/>
        <end position="443"/>
    </location>
</feature>
<feature type="binding site" evidence="2">
    <location>
        <position position="863"/>
    </location>
    <ligand>
        <name>a divalent metal cation</name>
        <dbReference type="ChEBI" id="CHEBI:60240"/>
        <note>catalytic</note>
    </ligand>
</feature>
<feature type="binding site" evidence="2">
    <location>
        <position position="865"/>
    </location>
    <ligand>
        <name>a divalent metal cation</name>
        <dbReference type="ChEBI" id="CHEBI:60240"/>
        <note>catalytic</note>
    </ligand>
</feature>
<feature type="binding site" evidence="2">
    <location>
        <position position="972"/>
    </location>
    <ligand>
        <name>a divalent metal cation</name>
        <dbReference type="ChEBI" id="CHEBI:60240"/>
        <note>catalytic</note>
    </ligand>
</feature>
<feature type="binding site" evidence="2">
    <location>
        <position position="1025"/>
    </location>
    <ligand>
        <name>a divalent metal cation</name>
        <dbReference type="ChEBI" id="CHEBI:60240"/>
        <note>catalytic</note>
    </ligand>
</feature>
<sequence>MDAWKEITKTTENDGVSTCSLSSIAFDPYSELVWTGHKNGQIKSSFGPSLTSYTQFIGHEGPVHQVLPQERGVFSLSSKSLRLSNRKGTIRWRYQDSDCIDYRAMFYQSRNNPEVVIGGYHQKLTVVNAERGISIHKDKNVSDIFIMRRNRLLCCGSTNGEIILRDPNSFQPVNKVVAHTGTISDIDTSGNLLLSCGYSLRHGTYMLDPFVKVWDLRNLSSLVPIPFPAGPTIIRMHPKLSTTAVVCSCSGQFHIVDTGNPLDAKLMQIPLTSYLTGMDIASTGDAMVFTDVEDNIHLWSPLENPSFSDLKLPIQLPNTSTETVQLENNDPLNSIGLPYYKDELLSSWSKYLIFDVGKPILDSNLLIAKQISENSHPVPQEIKSFHRNQIIEVPWLNRKLISEGATPKFHSERQKDIMSGNDIEGSASYFEEIEDTISGPDSIPKFYQRPVIKYSKFGIEDFDFGFYNKTKYAGLETDITNSYCNSVLQLLSYVPSFSKAAISHSLGPCDLMECLLCELGFLFAMLKESTGRNCQATNFLRAFSNSSFAQSLGIVFDDYSDGTFPDSFVIQKFTKFMLTEISRIADYEDKKDGTSFPVSFLLKSFCIPEMQTYRCGICGITSQKIKSSLYIIDLHYPSQQLESILSFEWLFKMSLDRRVDLPPGWCEYCLAHQPFLLRSFIRSLPDCLFINTQVKHHEHWKLWARKNWLPKKLHLRRVNDTMQCVSQKISNLDKDQQSLSVYVLRGIIYEIRQNGEEPHFVSTIRVSDNTSSDNPDDNRWYIFNDFLVKEVTEEEALTVHGPWKIPIIVYYEKLDTKIPQWDEVSDYTLLYQPYSLNKNPPINKIQPLTTDEMLYPKMLVGIDSEFVALQQEETEVRSDGTKSTIKPSKLSLARVSVLRGEGPNKGLPFIDDYVATDDKVTDYLTEYSGIHPGDLDPDRSPYNVVPLKVAYKKLRLLVNAGCIFVGHGLQKDFRIINLLVPPEQVVDTVDLFFLSSRQRKLSLKFLAWYLLDEEIQLTEHDSIEDALTALKLYDCYDKLKSQGKLEETLDNIYEVGRRFKFRPPSVASMSLEDRNSYGDESVISNQTN</sequence>
<protein>
    <recommendedName>
        <fullName evidence="2">PAN2-PAN3 deadenylation complex catalytic subunit pan2</fullName>
        <ecNumber evidence="2">3.1.13.4</ecNumber>
    </recommendedName>
    <alternativeName>
        <fullName evidence="2">PAB1P-dependent poly(A)-specific ribonuclease</fullName>
    </alternativeName>
    <alternativeName>
        <fullName evidence="2">Poly(A)-nuclease deadenylation complex subunit 2</fullName>
        <shortName evidence="2">PAN deadenylation complex subunit 2</shortName>
    </alternativeName>
</protein>
<accession>Q09798</accession>